<reference key="1">
    <citation type="journal article" date="2008" name="Antimicrob. Agents Chemother.">
        <title>Mutated response regulator graR is responsible for phenotypic conversion of Staphylococcus aureus from heterogeneous vancomycin-intermediate resistance to vancomycin-intermediate resistance.</title>
        <authorList>
            <person name="Neoh H.-M."/>
            <person name="Cui L."/>
            <person name="Yuzawa H."/>
            <person name="Takeuchi F."/>
            <person name="Matsuo M."/>
            <person name="Hiramatsu K."/>
        </authorList>
    </citation>
    <scope>NUCLEOTIDE SEQUENCE [LARGE SCALE GENOMIC DNA]</scope>
    <source>
        <strain>Mu3 / ATCC 700698</strain>
    </source>
</reference>
<organism>
    <name type="scientific">Staphylococcus aureus (strain Mu3 / ATCC 700698)</name>
    <dbReference type="NCBI Taxonomy" id="418127"/>
    <lineage>
        <taxon>Bacteria</taxon>
        <taxon>Bacillati</taxon>
        <taxon>Bacillota</taxon>
        <taxon>Bacilli</taxon>
        <taxon>Bacillales</taxon>
        <taxon>Staphylococcaceae</taxon>
        <taxon>Staphylococcus</taxon>
    </lineage>
</organism>
<keyword id="KW-0687">Ribonucleoprotein</keyword>
<keyword id="KW-0689">Ribosomal protein</keyword>
<keyword id="KW-0694">RNA-binding</keyword>
<keyword id="KW-0699">rRNA-binding</keyword>
<name>RL24_STAA1</name>
<proteinExistence type="inferred from homology"/>
<accession>A7X5E7</accession>
<protein>
    <recommendedName>
        <fullName evidence="1">Large ribosomal subunit protein uL24</fullName>
    </recommendedName>
    <alternativeName>
        <fullName evidence="2">50S ribosomal protein L24</fullName>
    </alternativeName>
</protein>
<comment type="function">
    <text evidence="1">One of two assembly initiator proteins, it binds directly to the 5'-end of the 23S rRNA, where it nucleates assembly of the 50S subunit.</text>
</comment>
<comment type="function">
    <text evidence="1">One of the proteins that surrounds the polypeptide exit tunnel on the outside of the subunit.</text>
</comment>
<comment type="subunit">
    <text evidence="1">Part of the 50S ribosomal subunit.</text>
</comment>
<comment type="similarity">
    <text evidence="1">Belongs to the universal ribosomal protein uL24 family.</text>
</comment>
<feature type="chain" id="PRO_1000052317" description="Large ribosomal subunit protein uL24">
    <location>
        <begin position="1"/>
        <end position="105"/>
    </location>
</feature>
<evidence type="ECO:0000255" key="1">
    <source>
        <dbReference type="HAMAP-Rule" id="MF_01326"/>
    </source>
</evidence>
<evidence type="ECO:0000305" key="2"/>
<sequence length="105" mass="11536">MHIKKGDNVKVIAGKDKGKEGKVIATLPKKDRVVVEGVNIMKKHQKPTQLNPEGGILETEAAIHVSNVQLLDPKTNEPTRVGYKFVDGKKVRIAKKSGEEIKSNN</sequence>
<gene>
    <name evidence="1" type="primary">rplX</name>
    <name type="ordered locus">SAHV_2223</name>
</gene>
<dbReference type="EMBL" id="AP009324">
    <property type="protein sequence ID" value="BAF79106.1"/>
    <property type="molecule type" value="Genomic_DNA"/>
</dbReference>
<dbReference type="RefSeq" id="WP_000547687.1">
    <property type="nucleotide sequence ID" value="NZ_CTYB01000025.1"/>
</dbReference>
<dbReference type="SMR" id="A7X5E7"/>
<dbReference type="KEGG" id="saw:SAHV_2223"/>
<dbReference type="HOGENOM" id="CLU_093315_2_0_9"/>
<dbReference type="GO" id="GO:1990904">
    <property type="term" value="C:ribonucleoprotein complex"/>
    <property type="evidence" value="ECO:0007669"/>
    <property type="project" value="UniProtKB-KW"/>
</dbReference>
<dbReference type="GO" id="GO:0005840">
    <property type="term" value="C:ribosome"/>
    <property type="evidence" value="ECO:0007669"/>
    <property type="project" value="UniProtKB-KW"/>
</dbReference>
<dbReference type="GO" id="GO:0019843">
    <property type="term" value="F:rRNA binding"/>
    <property type="evidence" value="ECO:0007669"/>
    <property type="project" value="UniProtKB-UniRule"/>
</dbReference>
<dbReference type="GO" id="GO:0003735">
    <property type="term" value="F:structural constituent of ribosome"/>
    <property type="evidence" value="ECO:0007669"/>
    <property type="project" value="InterPro"/>
</dbReference>
<dbReference type="GO" id="GO:0006412">
    <property type="term" value="P:translation"/>
    <property type="evidence" value="ECO:0007669"/>
    <property type="project" value="UniProtKB-UniRule"/>
</dbReference>
<dbReference type="CDD" id="cd06089">
    <property type="entry name" value="KOW_RPL26"/>
    <property type="match status" value="1"/>
</dbReference>
<dbReference type="FunFam" id="2.30.30.30:FF:000004">
    <property type="entry name" value="50S ribosomal protein L24"/>
    <property type="match status" value="1"/>
</dbReference>
<dbReference type="Gene3D" id="2.30.30.30">
    <property type="match status" value="1"/>
</dbReference>
<dbReference type="HAMAP" id="MF_01326_B">
    <property type="entry name" value="Ribosomal_uL24_B"/>
    <property type="match status" value="1"/>
</dbReference>
<dbReference type="InterPro" id="IPR005824">
    <property type="entry name" value="KOW"/>
</dbReference>
<dbReference type="InterPro" id="IPR014722">
    <property type="entry name" value="Rib_uL2_dom2"/>
</dbReference>
<dbReference type="InterPro" id="IPR003256">
    <property type="entry name" value="Ribosomal_uL24"/>
</dbReference>
<dbReference type="InterPro" id="IPR005825">
    <property type="entry name" value="Ribosomal_uL24_CS"/>
</dbReference>
<dbReference type="InterPro" id="IPR041988">
    <property type="entry name" value="Ribosomal_uL24_KOW"/>
</dbReference>
<dbReference type="InterPro" id="IPR008991">
    <property type="entry name" value="Translation_prot_SH3-like_sf"/>
</dbReference>
<dbReference type="NCBIfam" id="TIGR01079">
    <property type="entry name" value="rplX_bact"/>
    <property type="match status" value="1"/>
</dbReference>
<dbReference type="PANTHER" id="PTHR12903">
    <property type="entry name" value="MITOCHONDRIAL RIBOSOMAL PROTEIN L24"/>
    <property type="match status" value="1"/>
</dbReference>
<dbReference type="Pfam" id="PF00467">
    <property type="entry name" value="KOW"/>
    <property type="match status" value="1"/>
</dbReference>
<dbReference type="Pfam" id="PF17136">
    <property type="entry name" value="ribosomal_L24"/>
    <property type="match status" value="1"/>
</dbReference>
<dbReference type="SMART" id="SM00739">
    <property type="entry name" value="KOW"/>
    <property type="match status" value="1"/>
</dbReference>
<dbReference type="SUPFAM" id="SSF50104">
    <property type="entry name" value="Translation proteins SH3-like domain"/>
    <property type="match status" value="1"/>
</dbReference>
<dbReference type="PROSITE" id="PS01108">
    <property type="entry name" value="RIBOSOMAL_L24"/>
    <property type="match status" value="1"/>
</dbReference>